<dbReference type="EC" id="4.2.1.11" evidence="1"/>
<dbReference type="EMBL" id="CU234118">
    <property type="protein sequence ID" value="CAL77846.1"/>
    <property type="molecule type" value="Genomic_DNA"/>
</dbReference>
<dbReference type="RefSeq" id="WP_011926976.1">
    <property type="nucleotide sequence ID" value="NC_009445.1"/>
</dbReference>
<dbReference type="SMR" id="A4YVC0"/>
<dbReference type="STRING" id="114615.BRADO4094"/>
<dbReference type="KEGG" id="bra:BRADO4094"/>
<dbReference type="eggNOG" id="COG0148">
    <property type="taxonomic scope" value="Bacteria"/>
</dbReference>
<dbReference type="HOGENOM" id="CLU_031223_2_1_5"/>
<dbReference type="OrthoDB" id="9804716at2"/>
<dbReference type="UniPathway" id="UPA00109">
    <property type="reaction ID" value="UER00187"/>
</dbReference>
<dbReference type="Proteomes" id="UP000001994">
    <property type="component" value="Chromosome"/>
</dbReference>
<dbReference type="GO" id="GO:0009986">
    <property type="term" value="C:cell surface"/>
    <property type="evidence" value="ECO:0007669"/>
    <property type="project" value="UniProtKB-SubCell"/>
</dbReference>
<dbReference type="GO" id="GO:0005576">
    <property type="term" value="C:extracellular region"/>
    <property type="evidence" value="ECO:0007669"/>
    <property type="project" value="UniProtKB-SubCell"/>
</dbReference>
<dbReference type="GO" id="GO:0000015">
    <property type="term" value="C:phosphopyruvate hydratase complex"/>
    <property type="evidence" value="ECO:0007669"/>
    <property type="project" value="InterPro"/>
</dbReference>
<dbReference type="GO" id="GO:0000287">
    <property type="term" value="F:magnesium ion binding"/>
    <property type="evidence" value="ECO:0007669"/>
    <property type="project" value="UniProtKB-UniRule"/>
</dbReference>
<dbReference type="GO" id="GO:0004634">
    <property type="term" value="F:phosphopyruvate hydratase activity"/>
    <property type="evidence" value="ECO:0007669"/>
    <property type="project" value="UniProtKB-UniRule"/>
</dbReference>
<dbReference type="GO" id="GO:0006096">
    <property type="term" value="P:glycolytic process"/>
    <property type="evidence" value="ECO:0007669"/>
    <property type="project" value="UniProtKB-UniRule"/>
</dbReference>
<dbReference type="CDD" id="cd03313">
    <property type="entry name" value="enolase"/>
    <property type="match status" value="1"/>
</dbReference>
<dbReference type="FunFam" id="3.20.20.120:FF:000001">
    <property type="entry name" value="Enolase"/>
    <property type="match status" value="1"/>
</dbReference>
<dbReference type="FunFam" id="3.30.390.10:FF:000001">
    <property type="entry name" value="Enolase"/>
    <property type="match status" value="1"/>
</dbReference>
<dbReference type="Gene3D" id="3.20.20.120">
    <property type="entry name" value="Enolase-like C-terminal domain"/>
    <property type="match status" value="1"/>
</dbReference>
<dbReference type="Gene3D" id="3.30.390.10">
    <property type="entry name" value="Enolase-like, N-terminal domain"/>
    <property type="match status" value="1"/>
</dbReference>
<dbReference type="HAMAP" id="MF_00318">
    <property type="entry name" value="Enolase"/>
    <property type="match status" value="1"/>
</dbReference>
<dbReference type="InterPro" id="IPR000941">
    <property type="entry name" value="Enolase"/>
</dbReference>
<dbReference type="InterPro" id="IPR036849">
    <property type="entry name" value="Enolase-like_C_sf"/>
</dbReference>
<dbReference type="InterPro" id="IPR029017">
    <property type="entry name" value="Enolase-like_N"/>
</dbReference>
<dbReference type="InterPro" id="IPR020810">
    <property type="entry name" value="Enolase_C"/>
</dbReference>
<dbReference type="InterPro" id="IPR020809">
    <property type="entry name" value="Enolase_CS"/>
</dbReference>
<dbReference type="InterPro" id="IPR020811">
    <property type="entry name" value="Enolase_N"/>
</dbReference>
<dbReference type="NCBIfam" id="TIGR01060">
    <property type="entry name" value="eno"/>
    <property type="match status" value="1"/>
</dbReference>
<dbReference type="PANTHER" id="PTHR11902">
    <property type="entry name" value="ENOLASE"/>
    <property type="match status" value="1"/>
</dbReference>
<dbReference type="PANTHER" id="PTHR11902:SF1">
    <property type="entry name" value="ENOLASE"/>
    <property type="match status" value="1"/>
</dbReference>
<dbReference type="Pfam" id="PF00113">
    <property type="entry name" value="Enolase_C"/>
    <property type="match status" value="1"/>
</dbReference>
<dbReference type="Pfam" id="PF03952">
    <property type="entry name" value="Enolase_N"/>
    <property type="match status" value="1"/>
</dbReference>
<dbReference type="PIRSF" id="PIRSF001400">
    <property type="entry name" value="Enolase"/>
    <property type="match status" value="1"/>
</dbReference>
<dbReference type="PRINTS" id="PR00148">
    <property type="entry name" value="ENOLASE"/>
</dbReference>
<dbReference type="SFLD" id="SFLDS00001">
    <property type="entry name" value="Enolase"/>
    <property type="match status" value="1"/>
</dbReference>
<dbReference type="SFLD" id="SFLDF00002">
    <property type="entry name" value="enolase"/>
    <property type="match status" value="1"/>
</dbReference>
<dbReference type="SMART" id="SM01192">
    <property type="entry name" value="Enolase_C"/>
    <property type="match status" value="1"/>
</dbReference>
<dbReference type="SMART" id="SM01193">
    <property type="entry name" value="Enolase_N"/>
    <property type="match status" value="1"/>
</dbReference>
<dbReference type="SUPFAM" id="SSF51604">
    <property type="entry name" value="Enolase C-terminal domain-like"/>
    <property type="match status" value="1"/>
</dbReference>
<dbReference type="SUPFAM" id="SSF54826">
    <property type="entry name" value="Enolase N-terminal domain-like"/>
    <property type="match status" value="1"/>
</dbReference>
<dbReference type="PROSITE" id="PS00164">
    <property type="entry name" value="ENOLASE"/>
    <property type="match status" value="1"/>
</dbReference>
<keyword id="KW-0963">Cytoplasm</keyword>
<keyword id="KW-0324">Glycolysis</keyword>
<keyword id="KW-0456">Lyase</keyword>
<keyword id="KW-0460">Magnesium</keyword>
<keyword id="KW-0479">Metal-binding</keyword>
<keyword id="KW-1185">Reference proteome</keyword>
<keyword id="KW-0964">Secreted</keyword>
<feature type="chain" id="PRO_1000019189" description="Enolase">
    <location>
        <begin position="1"/>
        <end position="427"/>
    </location>
</feature>
<feature type="active site" description="Proton donor" evidence="1">
    <location>
        <position position="205"/>
    </location>
</feature>
<feature type="active site" description="Proton acceptor" evidence="1">
    <location>
        <position position="337"/>
    </location>
</feature>
<feature type="binding site" evidence="1">
    <location>
        <position position="163"/>
    </location>
    <ligand>
        <name>(2R)-2-phosphoglycerate</name>
        <dbReference type="ChEBI" id="CHEBI:58289"/>
    </ligand>
</feature>
<feature type="binding site" evidence="1">
    <location>
        <position position="242"/>
    </location>
    <ligand>
        <name>Mg(2+)</name>
        <dbReference type="ChEBI" id="CHEBI:18420"/>
    </ligand>
</feature>
<feature type="binding site" evidence="1">
    <location>
        <position position="285"/>
    </location>
    <ligand>
        <name>Mg(2+)</name>
        <dbReference type="ChEBI" id="CHEBI:18420"/>
    </ligand>
</feature>
<feature type="binding site" evidence="1">
    <location>
        <position position="312"/>
    </location>
    <ligand>
        <name>Mg(2+)</name>
        <dbReference type="ChEBI" id="CHEBI:18420"/>
    </ligand>
</feature>
<feature type="binding site" evidence="1">
    <location>
        <position position="337"/>
    </location>
    <ligand>
        <name>(2R)-2-phosphoglycerate</name>
        <dbReference type="ChEBI" id="CHEBI:58289"/>
    </ligand>
</feature>
<feature type="binding site" evidence="1">
    <location>
        <position position="366"/>
    </location>
    <ligand>
        <name>(2R)-2-phosphoglycerate</name>
        <dbReference type="ChEBI" id="CHEBI:58289"/>
    </ligand>
</feature>
<feature type="binding site" evidence="1">
    <location>
        <position position="367"/>
    </location>
    <ligand>
        <name>(2R)-2-phosphoglycerate</name>
        <dbReference type="ChEBI" id="CHEBI:58289"/>
    </ligand>
</feature>
<feature type="binding site" evidence="1">
    <location>
        <position position="388"/>
    </location>
    <ligand>
        <name>(2R)-2-phosphoglycerate</name>
        <dbReference type="ChEBI" id="CHEBI:58289"/>
    </ligand>
</feature>
<proteinExistence type="inferred from homology"/>
<comment type="function">
    <text evidence="1">Catalyzes the reversible conversion of 2-phosphoglycerate (2-PG) into phosphoenolpyruvate (PEP). It is essential for the degradation of carbohydrates via glycolysis.</text>
</comment>
<comment type="catalytic activity">
    <reaction evidence="1">
        <text>(2R)-2-phosphoglycerate = phosphoenolpyruvate + H2O</text>
        <dbReference type="Rhea" id="RHEA:10164"/>
        <dbReference type="ChEBI" id="CHEBI:15377"/>
        <dbReference type="ChEBI" id="CHEBI:58289"/>
        <dbReference type="ChEBI" id="CHEBI:58702"/>
        <dbReference type="EC" id="4.2.1.11"/>
    </reaction>
</comment>
<comment type="cofactor">
    <cofactor evidence="1">
        <name>Mg(2+)</name>
        <dbReference type="ChEBI" id="CHEBI:18420"/>
    </cofactor>
    <text evidence="1">Binds a second Mg(2+) ion via substrate during catalysis.</text>
</comment>
<comment type="pathway">
    <text evidence="1">Carbohydrate degradation; glycolysis; pyruvate from D-glyceraldehyde 3-phosphate: step 4/5.</text>
</comment>
<comment type="subcellular location">
    <subcellularLocation>
        <location evidence="1">Cytoplasm</location>
    </subcellularLocation>
    <subcellularLocation>
        <location evidence="1">Secreted</location>
    </subcellularLocation>
    <subcellularLocation>
        <location evidence="1">Cell surface</location>
    </subcellularLocation>
    <text evidence="1">Fractions of enolase are present in both the cytoplasm and on the cell surface.</text>
</comment>
<comment type="similarity">
    <text evidence="1">Belongs to the enolase family.</text>
</comment>
<gene>
    <name evidence="1" type="primary">eno</name>
    <name type="ordered locus">BRADO4094</name>
</gene>
<sequence length="427" mass="45702">MTAIVDIIGREILDSRGNPTVEVDVVLEDGSVGRAAVPSGASTGAHEAVELRDGDKRRYLGKGVQKAVEAINDEIYEALSDMSVQDQVQIDQILIELDGTENKSRLGANAILGVSLACAKAAAISYDMPLYRYVGGTSARTLPVPMMNIVNGGVHADNPIDFQEFMIMPVGAPSFAEALRCGSEIFHTLKGELKKAGHNTNVGDEGGFAPNLPSADAALDFVMAAIGKAGYTAGEDVMLALDCAATEFFKDGKYVYEGENKSRSRSEQAKYLADLVARYPICSIEDGMSEDDMDGWKELTDLIGHKCQLVGDDLFVTNVTRLEDGIRNGRANSILIKVNQIGTLTETLAAVEMAYKAGYTAVMSHRSGETEDSTIADLAVATNCGQIKTGSLARSDRTAKYNQLLRIEQELDAQAKYAGRAALKALA</sequence>
<name>ENO_BRASO</name>
<organism>
    <name type="scientific">Bradyrhizobium sp. (strain ORS 278)</name>
    <dbReference type="NCBI Taxonomy" id="114615"/>
    <lineage>
        <taxon>Bacteria</taxon>
        <taxon>Pseudomonadati</taxon>
        <taxon>Pseudomonadota</taxon>
        <taxon>Alphaproteobacteria</taxon>
        <taxon>Hyphomicrobiales</taxon>
        <taxon>Nitrobacteraceae</taxon>
        <taxon>Bradyrhizobium</taxon>
    </lineage>
</organism>
<protein>
    <recommendedName>
        <fullName evidence="1">Enolase</fullName>
        <ecNumber evidence="1">4.2.1.11</ecNumber>
    </recommendedName>
    <alternativeName>
        <fullName evidence="1">2-phospho-D-glycerate hydro-lyase</fullName>
    </alternativeName>
    <alternativeName>
        <fullName evidence="1">2-phosphoglycerate dehydratase</fullName>
    </alternativeName>
</protein>
<accession>A4YVC0</accession>
<reference key="1">
    <citation type="journal article" date="2007" name="Science">
        <title>Legumes symbioses: absence of nod genes in photosynthetic bradyrhizobia.</title>
        <authorList>
            <person name="Giraud E."/>
            <person name="Moulin L."/>
            <person name="Vallenet D."/>
            <person name="Barbe V."/>
            <person name="Cytryn E."/>
            <person name="Avarre J.-C."/>
            <person name="Jaubert M."/>
            <person name="Simon D."/>
            <person name="Cartieaux F."/>
            <person name="Prin Y."/>
            <person name="Bena G."/>
            <person name="Hannibal L."/>
            <person name="Fardoux J."/>
            <person name="Kojadinovic M."/>
            <person name="Vuillet L."/>
            <person name="Lajus A."/>
            <person name="Cruveiller S."/>
            <person name="Rouy Z."/>
            <person name="Mangenot S."/>
            <person name="Segurens B."/>
            <person name="Dossat C."/>
            <person name="Franck W.L."/>
            <person name="Chang W.-S."/>
            <person name="Saunders E."/>
            <person name="Bruce D."/>
            <person name="Richardson P."/>
            <person name="Normand P."/>
            <person name="Dreyfus B."/>
            <person name="Pignol D."/>
            <person name="Stacey G."/>
            <person name="Emerich D."/>
            <person name="Vermeglio A."/>
            <person name="Medigue C."/>
            <person name="Sadowsky M."/>
        </authorList>
    </citation>
    <scope>NUCLEOTIDE SEQUENCE [LARGE SCALE GENOMIC DNA]</scope>
    <source>
        <strain>ORS 278</strain>
    </source>
</reference>
<evidence type="ECO:0000255" key="1">
    <source>
        <dbReference type="HAMAP-Rule" id="MF_00318"/>
    </source>
</evidence>